<evidence type="ECO:0000255" key="1">
    <source>
        <dbReference type="HAMAP-Rule" id="MF_01318"/>
    </source>
</evidence>
<evidence type="ECO:0000305" key="2"/>
<comment type="function">
    <text evidence="1">Binds directly to 23S rRNA. The L1 stalk is quite mobile in the ribosome, and is involved in E site tRNA release.</text>
</comment>
<comment type="function">
    <text evidence="1">Protein L1 is also a translational repressor protein, it controls the translation of the L11 operon by binding to its mRNA.</text>
</comment>
<comment type="subunit">
    <text evidence="1">Part of the 50S ribosomal subunit.</text>
</comment>
<comment type="similarity">
    <text evidence="1">Belongs to the universal ribosomal protein uL1 family.</text>
</comment>
<keyword id="KW-1185">Reference proteome</keyword>
<keyword id="KW-0678">Repressor</keyword>
<keyword id="KW-0687">Ribonucleoprotein</keyword>
<keyword id="KW-0689">Ribosomal protein</keyword>
<keyword id="KW-0694">RNA-binding</keyword>
<keyword id="KW-0699">rRNA-binding</keyword>
<keyword id="KW-0810">Translation regulation</keyword>
<keyword id="KW-0820">tRNA-binding</keyword>
<gene>
    <name evidence="1" type="primary">rplA</name>
    <name type="ordered locus">MARTH_orf143</name>
</gene>
<feature type="chain" id="PRO_1000141432" description="Large ribosomal subunit protein uL1">
    <location>
        <begin position="1"/>
        <end position="230"/>
    </location>
</feature>
<proteinExistence type="inferred from homology"/>
<name>RL1_META1</name>
<dbReference type="EMBL" id="CP001047">
    <property type="protein sequence ID" value="ACF07079.1"/>
    <property type="molecule type" value="Genomic_DNA"/>
</dbReference>
<dbReference type="RefSeq" id="WP_012498036.1">
    <property type="nucleotide sequence ID" value="NC_011025.1"/>
</dbReference>
<dbReference type="SMR" id="B3PM27"/>
<dbReference type="STRING" id="243272.MARTH_orf143"/>
<dbReference type="KEGG" id="mat:MARTH_orf143"/>
<dbReference type="eggNOG" id="COG0081">
    <property type="taxonomic scope" value="Bacteria"/>
</dbReference>
<dbReference type="HOGENOM" id="CLU_062853_0_0_14"/>
<dbReference type="Proteomes" id="UP000008812">
    <property type="component" value="Chromosome"/>
</dbReference>
<dbReference type="GO" id="GO:0015934">
    <property type="term" value="C:large ribosomal subunit"/>
    <property type="evidence" value="ECO:0007669"/>
    <property type="project" value="InterPro"/>
</dbReference>
<dbReference type="GO" id="GO:0019843">
    <property type="term" value="F:rRNA binding"/>
    <property type="evidence" value="ECO:0007669"/>
    <property type="project" value="UniProtKB-UniRule"/>
</dbReference>
<dbReference type="GO" id="GO:0003735">
    <property type="term" value="F:structural constituent of ribosome"/>
    <property type="evidence" value="ECO:0007669"/>
    <property type="project" value="InterPro"/>
</dbReference>
<dbReference type="GO" id="GO:0000049">
    <property type="term" value="F:tRNA binding"/>
    <property type="evidence" value="ECO:0007669"/>
    <property type="project" value="UniProtKB-KW"/>
</dbReference>
<dbReference type="GO" id="GO:0006417">
    <property type="term" value="P:regulation of translation"/>
    <property type="evidence" value="ECO:0007669"/>
    <property type="project" value="UniProtKB-KW"/>
</dbReference>
<dbReference type="GO" id="GO:0006412">
    <property type="term" value="P:translation"/>
    <property type="evidence" value="ECO:0007669"/>
    <property type="project" value="UniProtKB-UniRule"/>
</dbReference>
<dbReference type="CDD" id="cd00403">
    <property type="entry name" value="Ribosomal_L1"/>
    <property type="match status" value="1"/>
</dbReference>
<dbReference type="FunFam" id="3.40.50.790:FF:000001">
    <property type="entry name" value="50S ribosomal protein L1"/>
    <property type="match status" value="1"/>
</dbReference>
<dbReference type="Gene3D" id="3.30.190.20">
    <property type="match status" value="1"/>
</dbReference>
<dbReference type="Gene3D" id="3.40.50.790">
    <property type="match status" value="1"/>
</dbReference>
<dbReference type="HAMAP" id="MF_01318_B">
    <property type="entry name" value="Ribosomal_uL1_B"/>
    <property type="match status" value="1"/>
</dbReference>
<dbReference type="InterPro" id="IPR005878">
    <property type="entry name" value="Ribosom_uL1_bac-type"/>
</dbReference>
<dbReference type="InterPro" id="IPR002143">
    <property type="entry name" value="Ribosomal_uL1"/>
</dbReference>
<dbReference type="InterPro" id="IPR023674">
    <property type="entry name" value="Ribosomal_uL1-like"/>
</dbReference>
<dbReference type="InterPro" id="IPR028364">
    <property type="entry name" value="Ribosomal_uL1/biogenesis"/>
</dbReference>
<dbReference type="InterPro" id="IPR016095">
    <property type="entry name" value="Ribosomal_uL1_3-a/b-sand"/>
</dbReference>
<dbReference type="InterPro" id="IPR023673">
    <property type="entry name" value="Ribosomal_uL1_CS"/>
</dbReference>
<dbReference type="NCBIfam" id="TIGR01169">
    <property type="entry name" value="rplA_bact"/>
    <property type="match status" value="1"/>
</dbReference>
<dbReference type="PANTHER" id="PTHR36427">
    <property type="entry name" value="54S RIBOSOMAL PROTEIN L1, MITOCHONDRIAL"/>
    <property type="match status" value="1"/>
</dbReference>
<dbReference type="PANTHER" id="PTHR36427:SF3">
    <property type="entry name" value="LARGE RIBOSOMAL SUBUNIT PROTEIN UL1M"/>
    <property type="match status" value="1"/>
</dbReference>
<dbReference type="Pfam" id="PF00687">
    <property type="entry name" value="Ribosomal_L1"/>
    <property type="match status" value="1"/>
</dbReference>
<dbReference type="PIRSF" id="PIRSF002155">
    <property type="entry name" value="Ribosomal_L1"/>
    <property type="match status" value="1"/>
</dbReference>
<dbReference type="SUPFAM" id="SSF56808">
    <property type="entry name" value="Ribosomal protein L1"/>
    <property type="match status" value="1"/>
</dbReference>
<dbReference type="PROSITE" id="PS01199">
    <property type="entry name" value="RIBOSOMAL_L1"/>
    <property type="match status" value="1"/>
</dbReference>
<protein>
    <recommendedName>
        <fullName evidence="1">Large ribosomal subunit protein uL1</fullName>
    </recommendedName>
    <alternativeName>
        <fullName evidence="2">50S ribosomal protein L1</fullName>
    </alternativeName>
</protein>
<organism>
    <name type="scientific">Metamycoplasma arthritidis (strain 158L3-1)</name>
    <name type="common">Mycoplasma arthritidis</name>
    <dbReference type="NCBI Taxonomy" id="243272"/>
    <lineage>
        <taxon>Bacteria</taxon>
        <taxon>Bacillati</taxon>
        <taxon>Mycoplasmatota</taxon>
        <taxon>Mycoplasmoidales</taxon>
        <taxon>Metamycoplasmataceae</taxon>
        <taxon>Metamycoplasma</taxon>
    </lineage>
</organism>
<reference key="1">
    <citation type="journal article" date="2008" name="Infect. Immun.">
        <title>Genome of Mycoplasma arthritidis.</title>
        <authorList>
            <person name="Dybvig K."/>
            <person name="Zuhua C."/>
            <person name="Lao P."/>
            <person name="Jordan D.S."/>
            <person name="French C.T."/>
            <person name="Tu A.H."/>
            <person name="Loraine A.E."/>
        </authorList>
    </citation>
    <scope>NUCLEOTIDE SEQUENCE [LARGE SCALE GENOMIC DNA]</scope>
    <source>
        <strain>158L3-1</strain>
    </source>
</reference>
<sequence>MARKLSKNVKNAKAQVNKTDVFSLLEAIELAKKISFAKFDESLDIAINLNLDTRKSDQQLRGAVALPHGTGKNVKVLVATDEVSAQKAAKDAGADYVYTAAELPEVLNQDKYDFDVIVADPKMMLVLGKYGKKLGPKGLMPNPKTGTVTTNPAKAVEELKKGKANYRADKGGIIHASVGKKSMDSQKLVENAETLIQTIKRLKPTTVKGTYVLNITVSTSMGPSIKVKID</sequence>
<accession>B3PM27</accession>